<keyword id="KW-1003">Cell membrane</keyword>
<keyword id="KW-0406">Ion transport</keyword>
<keyword id="KW-0472">Membrane</keyword>
<keyword id="KW-0630">Potassium</keyword>
<keyword id="KW-0633">Potassium transport</keyword>
<keyword id="KW-0812">Transmembrane</keyword>
<keyword id="KW-1133">Transmembrane helix</keyword>
<keyword id="KW-0813">Transport</keyword>
<accession>A1KHG8</accession>
<protein>
    <recommendedName>
        <fullName evidence="1">Potassium-transporting ATPase potassium-binding subunit</fullName>
    </recommendedName>
    <alternativeName>
        <fullName evidence="1">ATP phosphohydrolase [potassium-transporting] A chain</fullName>
    </alternativeName>
    <alternativeName>
        <fullName evidence="1">Potassium-binding and translocating subunit A</fullName>
    </alternativeName>
    <alternativeName>
        <fullName evidence="1">Potassium-translocating ATPase A chain</fullName>
    </alternativeName>
</protein>
<feature type="chain" id="PRO_1000022232" description="Potassium-transporting ATPase potassium-binding subunit">
    <location>
        <begin position="1"/>
        <end position="571"/>
    </location>
</feature>
<feature type="transmembrane region" description="Helical" evidence="1">
    <location>
        <begin position="7"/>
        <end position="27"/>
    </location>
</feature>
<feature type="transmembrane region" description="Helical" evidence="1">
    <location>
        <begin position="66"/>
        <end position="86"/>
    </location>
</feature>
<feature type="transmembrane region" description="Helical" evidence="1">
    <location>
        <begin position="137"/>
        <end position="157"/>
    </location>
</feature>
<feature type="transmembrane region" description="Helical" evidence="1">
    <location>
        <begin position="188"/>
        <end position="208"/>
    </location>
</feature>
<feature type="transmembrane region" description="Helical" evidence="1">
    <location>
        <begin position="255"/>
        <end position="275"/>
    </location>
</feature>
<feature type="transmembrane region" description="Helical" evidence="1">
    <location>
        <begin position="286"/>
        <end position="306"/>
    </location>
</feature>
<feature type="transmembrane region" description="Helical" evidence="1">
    <location>
        <begin position="390"/>
        <end position="410"/>
    </location>
</feature>
<feature type="transmembrane region" description="Helical" evidence="1">
    <location>
        <begin position="430"/>
        <end position="450"/>
    </location>
</feature>
<feature type="transmembrane region" description="Helical" evidence="1">
    <location>
        <begin position="497"/>
        <end position="517"/>
    </location>
</feature>
<feature type="transmembrane region" description="Helical" evidence="1">
    <location>
        <begin position="538"/>
        <end position="558"/>
    </location>
</feature>
<gene>
    <name evidence="1" type="primary">kdpA</name>
    <name type="ordered locus">BCG_1087</name>
</gene>
<reference key="1">
    <citation type="journal article" date="2007" name="Proc. Natl. Acad. Sci. U.S.A.">
        <title>Genome plasticity of BCG and impact on vaccine efficacy.</title>
        <authorList>
            <person name="Brosch R."/>
            <person name="Gordon S.V."/>
            <person name="Garnier T."/>
            <person name="Eiglmeier K."/>
            <person name="Frigui W."/>
            <person name="Valenti P."/>
            <person name="Dos Santos S."/>
            <person name="Duthoy S."/>
            <person name="Lacroix C."/>
            <person name="Garcia-Pelayo C."/>
            <person name="Inwald J.K."/>
            <person name="Golby P."/>
            <person name="Garcia J.N."/>
            <person name="Hewinson R.G."/>
            <person name="Behr M.A."/>
            <person name="Quail M.A."/>
            <person name="Churcher C."/>
            <person name="Barrell B.G."/>
            <person name="Parkhill J."/>
            <person name="Cole S.T."/>
        </authorList>
    </citation>
    <scope>NUCLEOTIDE SEQUENCE [LARGE SCALE GENOMIC DNA]</scope>
    <source>
        <strain>BCG / Pasteur 1173P2</strain>
    </source>
</reference>
<proteinExistence type="inferred from homology"/>
<evidence type="ECO:0000255" key="1">
    <source>
        <dbReference type="HAMAP-Rule" id="MF_00275"/>
    </source>
</evidence>
<name>KDPA_MYCBP</name>
<comment type="function">
    <text evidence="1">Part of the high-affinity ATP-driven potassium transport (or Kdp) system, which catalyzes the hydrolysis of ATP coupled with the electrogenic transport of potassium into the cytoplasm. This subunit binds the extracellular potassium ions and delivers the ions to the membrane domain of KdpB through an intramembrane tunnel.</text>
</comment>
<comment type="subunit">
    <text evidence="1">The system is composed of three essential subunits: KdpA, KdpB and KdpC.</text>
</comment>
<comment type="subcellular location">
    <subcellularLocation>
        <location evidence="1">Cell membrane</location>
        <topology evidence="1">Multi-pass membrane protein</topology>
    </subcellularLocation>
</comment>
<comment type="similarity">
    <text evidence="1">Belongs to the KdpA family.</text>
</comment>
<organism>
    <name type="scientific">Mycobacterium bovis (strain BCG / Pasteur 1173P2)</name>
    <dbReference type="NCBI Taxonomy" id="410289"/>
    <lineage>
        <taxon>Bacteria</taxon>
        <taxon>Bacillati</taxon>
        <taxon>Actinomycetota</taxon>
        <taxon>Actinomycetes</taxon>
        <taxon>Mycobacteriales</taxon>
        <taxon>Mycobacteriaceae</taxon>
        <taxon>Mycobacterium</taxon>
        <taxon>Mycobacterium tuberculosis complex</taxon>
    </lineage>
</organism>
<dbReference type="EMBL" id="AM408590">
    <property type="protein sequence ID" value="CAL71074.1"/>
    <property type="molecule type" value="Genomic_DNA"/>
</dbReference>
<dbReference type="RefSeq" id="WP_003405318.1">
    <property type="nucleotide sequence ID" value="NC_008769.1"/>
</dbReference>
<dbReference type="SMR" id="A1KHG8"/>
<dbReference type="KEGG" id="mbb:BCG_1087"/>
<dbReference type="HOGENOM" id="CLU_018614_3_0_11"/>
<dbReference type="Proteomes" id="UP000001472">
    <property type="component" value="Chromosome"/>
</dbReference>
<dbReference type="GO" id="GO:0005886">
    <property type="term" value="C:plasma membrane"/>
    <property type="evidence" value="ECO:0007669"/>
    <property type="project" value="UniProtKB-SubCell"/>
</dbReference>
<dbReference type="GO" id="GO:0008556">
    <property type="term" value="F:P-type potassium transmembrane transporter activity"/>
    <property type="evidence" value="ECO:0007669"/>
    <property type="project" value="InterPro"/>
</dbReference>
<dbReference type="GO" id="GO:0030955">
    <property type="term" value="F:potassium ion binding"/>
    <property type="evidence" value="ECO:0007669"/>
    <property type="project" value="UniProtKB-UniRule"/>
</dbReference>
<dbReference type="HAMAP" id="MF_00275">
    <property type="entry name" value="KdpA"/>
    <property type="match status" value="1"/>
</dbReference>
<dbReference type="InterPro" id="IPR004623">
    <property type="entry name" value="KdpA"/>
</dbReference>
<dbReference type="NCBIfam" id="TIGR00680">
    <property type="entry name" value="kdpA"/>
    <property type="match status" value="1"/>
</dbReference>
<dbReference type="PANTHER" id="PTHR30607">
    <property type="entry name" value="POTASSIUM-TRANSPORTING ATPASE A CHAIN"/>
    <property type="match status" value="1"/>
</dbReference>
<dbReference type="PANTHER" id="PTHR30607:SF2">
    <property type="entry name" value="POTASSIUM-TRANSPORTING ATPASE POTASSIUM-BINDING SUBUNIT"/>
    <property type="match status" value="1"/>
</dbReference>
<dbReference type="Pfam" id="PF03814">
    <property type="entry name" value="KdpA"/>
    <property type="match status" value="1"/>
</dbReference>
<dbReference type="PIRSF" id="PIRSF001294">
    <property type="entry name" value="K_ATPaseA"/>
    <property type="match status" value="1"/>
</dbReference>
<sequence length="571" mass="60163">MSGTSWLQFAALIAVLLLTAPALGGYLAKIYGDEAKKPGDRVFGPIERVIYQVCRVDPGSEQRWSTYALSVLAFSVMSFLLLYGIARFQGVLPFNPTDKPAVTDHVAFNAAVSFMTNTNWQSYSGEATMSHFTQMTGLAVQNFVSASAGMCVLAALIRGLARKRASTLGNFWVDLARTVLRIMFPLSFVVAILLVSQGVIQNLHGFIVANTLEGAPQLIPGGPVASQVAIKQLGTNGGGFFNVNSAHPFENYTPIGNFVENWAILIIPFALCFAFGKMVHDRRQGWAVLAIMGIIWIGMSVAAMSFEAKGNPRLDALGVTQQTTVDQSGGNLEGKEVRFGVGASGLWAASTTGTSNGSVNSMHDSYTPLGGMVPLAHMMLGEVSPGGTGVGLNGLLVMAILAVFIAGLMVGRTPEYLGKKIQATEMKLVTLYILAMPIALLSFAAASVLISSALASRNNPGPHGLSEILYAYTSGANNNGSAFAGLTASTWSYDTTIGVAMLIGRFFLIIPVLAIAGSLARKGTTPVTAATFPTHKPLFVGLVIGVVLIVGGLTFFPALALGPIVEQLSTQ</sequence>